<name>RS9_BURM7</name>
<comment type="similarity">
    <text evidence="1">Belongs to the universal ribosomal protein uS9 family.</text>
</comment>
<protein>
    <recommendedName>
        <fullName evidence="1">Small ribosomal subunit protein uS9</fullName>
    </recommendedName>
    <alternativeName>
        <fullName evidence="2">30S ribosomal protein S9</fullName>
    </alternativeName>
</protein>
<evidence type="ECO:0000255" key="1">
    <source>
        <dbReference type="HAMAP-Rule" id="MF_00532"/>
    </source>
</evidence>
<evidence type="ECO:0000305" key="2"/>
<proteinExistence type="inferred from homology"/>
<dbReference type="EMBL" id="CP000548">
    <property type="protein sequence ID" value="ABO06385.1"/>
    <property type="molecule type" value="Genomic_DNA"/>
</dbReference>
<dbReference type="RefSeq" id="WP_004194309.1">
    <property type="nucleotide sequence ID" value="NZ_CP007802.1"/>
</dbReference>
<dbReference type="SMR" id="A3MP60"/>
<dbReference type="GeneID" id="93061506"/>
<dbReference type="KEGG" id="bmaz:BM44_783"/>
<dbReference type="KEGG" id="bmn:BMA10247_2520"/>
<dbReference type="PATRIC" id="fig|320389.8.peg.870"/>
<dbReference type="GO" id="GO:0022627">
    <property type="term" value="C:cytosolic small ribosomal subunit"/>
    <property type="evidence" value="ECO:0007669"/>
    <property type="project" value="TreeGrafter"/>
</dbReference>
<dbReference type="GO" id="GO:0003723">
    <property type="term" value="F:RNA binding"/>
    <property type="evidence" value="ECO:0007669"/>
    <property type="project" value="TreeGrafter"/>
</dbReference>
<dbReference type="GO" id="GO:0003735">
    <property type="term" value="F:structural constituent of ribosome"/>
    <property type="evidence" value="ECO:0007669"/>
    <property type="project" value="InterPro"/>
</dbReference>
<dbReference type="GO" id="GO:0006412">
    <property type="term" value="P:translation"/>
    <property type="evidence" value="ECO:0007669"/>
    <property type="project" value="UniProtKB-UniRule"/>
</dbReference>
<dbReference type="FunFam" id="3.30.230.10:FF:000001">
    <property type="entry name" value="30S ribosomal protein S9"/>
    <property type="match status" value="1"/>
</dbReference>
<dbReference type="Gene3D" id="3.30.230.10">
    <property type="match status" value="1"/>
</dbReference>
<dbReference type="HAMAP" id="MF_00532_B">
    <property type="entry name" value="Ribosomal_uS9_B"/>
    <property type="match status" value="1"/>
</dbReference>
<dbReference type="InterPro" id="IPR020568">
    <property type="entry name" value="Ribosomal_Su5_D2-typ_SF"/>
</dbReference>
<dbReference type="InterPro" id="IPR000754">
    <property type="entry name" value="Ribosomal_uS9"/>
</dbReference>
<dbReference type="InterPro" id="IPR023035">
    <property type="entry name" value="Ribosomal_uS9_bac/plastid"/>
</dbReference>
<dbReference type="InterPro" id="IPR020574">
    <property type="entry name" value="Ribosomal_uS9_CS"/>
</dbReference>
<dbReference type="InterPro" id="IPR014721">
    <property type="entry name" value="Ribsml_uS5_D2-typ_fold_subgr"/>
</dbReference>
<dbReference type="NCBIfam" id="NF001099">
    <property type="entry name" value="PRK00132.1"/>
    <property type="match status" value="1"/>
</dbReference>
<dbReference type="PANTHER" id="PTHR21569">
    <property type="entry name" value="RIBOSOMAL PROTEIN S9"/>
    <property type="match status" value="1"/>
</dbReference>
<dbReference type="PANTHER" id="PTHR21569:SF1">
    <property type="entry name" value="SMALL RIBOSOMAL SUBUNIT PROTEIN US9M"/>
    <property type="match status" value="1"/>
</dbReference>
<dbReference type="Pfam" id="PF00380">
    <property type="entry name" value="Ribosomal_S9"/>
    <property type="match status" value="1"/>
</dbReference>
<dbReference type="SUPFAM" id="SSF54211">
    <property type="entry name" value="Ribosomal protein S5 domain 2-like"/>
    <property type="match status" value="1"/>
</dbReference>
<dbReference type="PROSITE" id="PS00360">
    <property type="entry name" value="RIBOSOMAL_S9"/>
    <property type="match status" value="1"/>
</dbReference>
<reference key="1">
    <citation type="journal article" date="2010" name="Genome Biol. Evol.">
        <title>Continuing evolution of Burkholderia mallei through genome reduction and large-scale rearrangements.</title>
        <authorList>
            <person name="Losada L."/>
            <person name="Ronning C.M."/>
            <person name="DeShazer D."/>
            <person name="Woods D."/>
            <person name="Fedorova N."/>
            <person name="Kim H.S."/>
            <person name="Shabalina S.A."/>
            <person name="Pearson T.R."/>
            <person name="Brinkac L."/>
            <person name="Tan P."/>
            <person name="Nandi T."/>
            <person name="Crabtree J."/>
            <person name="Badger J."/>
            <person name="Beckstrom-Sternberg S."/>
            <person name="Saqib M."/>
            <person name="Schutzer S.E."/>
            <person name="Keim P."/>
            <person name="Nierman W.C."/>
        </authorList>
    </citation>
    <scope>NUCLEOTIDE SEQUENCE [LARGE SCALE GENOMIC DNA]</scope>
    <source>
        <strain>NCTC 10247</strain>
    </source>
</reference>
<organism>
    <name type="scientific">Burkholderia mallei (strain NCTC 10247)</name>
    <dbReference type="NCBI Taxonomy" id="320389"/>
    <lineage>
        <taxon>Bacteria</taxon>
        <taxon>Pseudomonadati</taxon>
        <taxon>Pseudomonadota</taxon>
        <taxon>Betaproteobacteria</taxon>
        <taxon>Burkholderiales</taxon>
        <taxon>Burkholderiaceae</taxon>
        <taxon>Burkholderia</taxon>
        <taxon>pseudomallei group</taxon>
    </lineage>
</organism>
<sequence>MIGNWNYGTGRRKSAVARVFIKAGKGDIVVNGKPISDYFSRETSLMIVRQPLELTNHAQTFDIKVNVSGGGETGQAGAVRHGITRALIDYDATLKPALSNAGFVTRDAREVERKKVGLHKARRAKQFSKR</sequence>
<gene>
    <name evidence="1" type="primary">rpsI</name>
    <name type="ordered locus">BMA10247_2520</name>
</gene>
<keyword id="KW-0687">Ribonucleoprotein</keyword>
<keyword id="KW-0689">Ribosomal protein</keyword>
<accession>A3MP60</accession>
<feature type="chain" id="PRO_1000051183" description="Small ribosomal subunit protein uS9">
    <location>
        <begin position="1"/>
        <end position="130"/>
    </location>
</feature>